<sequence length="460" mass="50722">MLNGNKCHILLLPCPAQGHINPILQFGKRLASHNLLTTLVNTRFLSNSTKSEPGPVNIQCISDGFDPGGMNAAPSRRAYFDRPQSRSGQKHVGLIESLRSRGRPGACFGLRPVPLWAMNVAERSGLRSVAFFTQPCAVDTIYRHVWEGRIKVPVAEPVRLPGLPPLEPSDLPCVRNGFGRVVNPDLLPLRVNQHKNLDKADMMGRNSIYELEADLLDGSRLPLPVKSIGPTVPSTYLDNRIPSDSHYGFNLYTPDTTPYLDWLDSKAPNSVIYVSFGSLSSLSPDQTNEIASGLIATNKSFIWVVRTSELAKLPANFTQENASRGLVVTWCDQLDLLAHVATGCFVTHCGWNSTMEGVALGVPMVGVPQWSDQPMNAKYVEDVWKVGVRAKTYGKDFVRGEEFKRCVEEVMDGERSGKIRENAARWCKLAKDSVSEGGSSDKCIKEFIHQCCNDSKISLV</sequence>
<reference key="1">
    <citation type="journal article" date="2004" name="Planta">
        <title>Glucosylation of the saffron apocarotenoid crocetin by a glucosyltransferase isolated from Crocus sativus stigmas.</title>
        <authorList>
            <person name="Moraga A.R."/>
            <person name="Nohales P.F."/>
            <person name="Perez J.A."/>
            <person name="Gomez-Gomez L."/>
        </authorList>
    </citation>
    <scope>NUCLEOTIDE SEQUENCE [MRNA]</scope>
    <scope>CATALYTIC ACTIVITY</scope>
    <scope>FUNCTION</scope>
    <scope>TISSUE SPECIFICITY</scope>
</reference>
<reference key="2">
    <citation type="journal article" date="2000" name="Plant Sci.">
        <title>Properties of a glucosyltransferase involved in crocin synthesis.</title>
        <authorList>
            <person name="Cote F."/>
            <person name="Cormier F."/>
            <person name="Dufresne C."/>
            <person name="Willemot C."/>
        </authorList>
    </citation>
    <scope>CATALYTIC ACTIVITY</scope>
    <scope>BIOPHYSICOCHEMICAL PROPERTIES</scope>
</reference>
<dbReference type="EC" id="2.4.1.271"/>
<dbReference type="EMBL" id="AY262037">
    <property type="protein sequence ID" value="AAP94878.1"/>
    <property type="molecule type" value="mRNA"/>
</dbReference>
<dbReference type="SMR" id="Q6X1C0"/>
<dbReference type="CAZy" id="GT1">
    <property type="family name" value="Glycosyltransferase Family 1"/>
</dbReference>
<dbReference type="KEGG" id="ag:AAP94878"/>
<dbReference type="BioCyc" id="MetaCyc:MONOMER-12719"/>
<dbReference type="BRENDA" id="2.4.1.271">
    <property type="organism ID" value="7275"/>
</dbReference>
<dbReference type="GO" id="GO:0080043">
    <property type="term" value="F:quercetin 3-O-glucosyltransferase activity"/>
    <property type="evidence" value="ECO:0007669"/>
    <property type="project" value="TreeGrafter"/>
</dbReference>
<dbReference type="GO" id="GO:0080044">
    <property type="term" value="F:quercetin 7-O-glucosyltransferase activity"/>
    <property type="evidence" value="ECO:0007669"/>
    <property type="project" value="TreeGrafter"/>
</dbReference>
<dbReference type="GO" id="GO:0016117">
    <property type="term" value="P:carotenoid biosynthetic process"/>
    <property type="evidence" value="ECO:0007669"/>
    <property type="project" value="UniProtKB-KW"/>
</dbReference>
<dbReference type="CDD" id="cd03784">
    <property type="entry name" value="GT1_Gtf-like"/>
    <property type="match status" value="1"/>
</dbReference>
<dbReference type="FunFam" id="3.40.50.2000:FF:000019">
    <property type="entry name" value="Glycosyltransferase"/>
    <property type="match status" value="1"/>
</dbReference>
<dbReference type="Gene3D" id="3.40.50.2000">
    <property type="entry name" value="Glycogen Phosphorylase B"/>
    <property type="match status" value="2"/>
</dbReference>
<dbReference type="InterPro" id="IPR002213">
    <property type="entry name" value="UDP_glucos_trans"/>
</dbReference>
<dbReference type="InterPro" id="IPR035595">
    <property type="entry name" value="UDP_glycos_trans_CS"/>
</dbReference>
<dbReference type="PANTHER" id="PTHR11926">
    <property type="entry name" value="GLUCOSYL/GLUCURONOSYL TRANSFERASES"/>
    <property type="match status" value="1"/>
</dbReference>
<dbReference type="PANTHER" id="PTHR11926:SF1553">
    <property type="entry name" value="GLYCOSYLTRANSFERASE"/>
    <property type="match status" value="1"/>
</dbReference>
<dbReference type="Pfam" id="PF00201">
    <property type="entry name" value="UDPGT"/>
    <property type="match status" value="1"/>
</dbReference>
<dbReference type="SUPFAM" id="SSF53756">
    <property type="entry name" value="UDP-Glycosyltransferase/glycogen phosphorylase"/>
    <property type="match status" value="1"/>
</dbReference>
<dbReference type="PROSITE" id="PS00375">
    <property type="entry name" value="UDPGT"/>
    <property type="match status" value="1"/>
</dbReference>
<protein>
    <recommendedName>
        <fullName>Crocetin glucosyltransferase 2</fullName>
        <ecNumber>2.4.1.271</ecNumber>
    </recommendedName>
</protein>
<comment type="function">
    <text evidence="3">Crocetin glucosyltransferase involved in the synthesis of crocin, one of the apocarotenoids responsible for the color and bitter taste of saffron.</text>
</comment>
<comment type="catalytic activity">
    <reaction evidence="3 4">
        <text>crocetin + UDP-alpha-D-glucose = beta-D-glucosyl crocetin + UDP</text>
        <dbReference type="Rhea" id="RHEA:31463"/>
        <dbReference type="ChEBI" id="CHEBI:58223"/>
        <dbReference type="ChEBI" id="CHEBI:58885"/>
        <dbReference type="ChEBI" id="CHEBI:62766"/>
        <dbReference type="ChEBI" id="CHEBI:62767"/>
        <dbReference type="EC" id="2.4.1.271"/>
    </reaction>
</comment>
<comment type="catalytic activity">
    <reaction evidence="3 4">
        <text>beta-D-glucosyl crocetin + UDP-alpha-D-glucose = bis(beta-D-glucosyl) crocetin + UDP</text>
        <dbReference type="Rhea" id="RHEA:31467"/>
        <dbReference type="ChEBI" id="CHEBI:58223"/>
        <dbReference type="ChEBI" id="CHEBI:58885"/>
        <dbReference type="ChEBI" id="CHEBI:62766"/>
        <dbReference type="ChEBI" id="CHEBI:62768"/>
        <dbReference type="EC" id="2.4.1.271"/>
    </reaction>
</comment>
<comment type="catalytic activity">
    <reaction evidence="3 4">
        <text>beta-D-gentiobiosyl crocetin + UDP-alpha-D-glucose = beta-D-gentiobiosyl beta-D-glucosyl crocetin + UDP</text>
        <dbReference type="Rhea" id="RHEA:31471"/>
        <dbReference type="ChEBI" id="CHEBI:58223"/>
        <dbReference type="ChEBI" id="CHEBI:58885"/>
        <dbReference type="ChEBI" id="CHEBI:62770"/>
        <dbReference type="ChEBI" id="CHEBI:62771"/>
        <dbReference type="EC" id="2.4.1.271"/>
    </reaction>
</comment>
<comment type="biophysicochemical properties">
    <kinetics>
        <KM evidence="4">0.17 mM for crocetin</KM>
        <KM evidence="4">0.72 mM for UDP-glucose</KM>
        <text>These parameters were determined on purified activity containing a mix of 2 enzymes, probably GLT2 and GLT3.</text>
    </kinetics>
</comment>
<comment type="tissue specificity">
    <text evidence="3">Mainly expressed in fully developed stigmas.</text>
</comment>
<comment type="similarity">
    <text evidence="5">Belongs to the UDP-glycosyltransferase family.</text>
</comment>
<proteinExistence type="evidence at protein level"/>
<accession>Q6X1C0</accession>
<organism>
    <name type="scientific">Crocus sativus</name>
    <name type="common">Saffron</name>
    <dbReference type="NCBI Taxonomy" id="82528"/>
    <lineage>
        <taxon>Eukaryota</taxon>
        <taxon>Viridiplantae</taxon>
        <taxon>Streptophyta</taxon>
        <taxon>Embryophyta</taxon>
        <taxon>Tracheophyta</taxon>
        <taxon>Spermatophyta</taxon>
        <taxon>Magnoliopsida</taxon>
        <taxon>Liliopsida</taxon>
        <taxon>Asparagales</taxon>
        <taxon>Iridaceae</taxon>
        <taxon>Crocoideae</taxon>
        <taxon>Croceae</taxon>
        <taxon>Crocus</taxon>
    </lineage>
</organism>
<feature type="chain" id="PRO_0000418815" description="Crocetin glucosyltransferase 2">
    <location>
        <begin position="1"/>
        <end position="460"/>
    </location>
</feature>
<feature type="active site" description="Proton acceptor" evidence="1">
    <location>
        <position position="19"/>
    </location>
</feature>
<feature type="binding site" evidence="2">
    <location>
        <position position="19"/>
    </location>
    <ligand>
        <name>an anthocyanidin</name>
        <dbReference type="ChEBI" id="CHEBI:143576"/>
    </ligand>
</feature>
<feature type="binding site" evidence="1">
    <location>
        <position position="133"/>
    </location>
    <ligand>
        <name>UDP-alpha-D-glucose</name>
        <dbReference type="ChEBI" id="CHEBI:58885"/>
    </ligand>
</feature>
<feature type="binding site" evidence="1">
    <location>
        <position position="333"/>
    </location>
    <ligand>
        <name>UDP-alpha-D-glucose</name>
        <dbReference type="ChEBI" id="CHEBI:58885"/>
    </ligand>
</feature>
<feature type="binding site" evidence="1">
    <location>
        <position position="348"/>
    </location>
    <ligand>
        <name>UDP-alpha-D-glucose</name>
        <dbReference type="ChEBI" id="CHEBI:58885"/>
    </ligand>
</feature>
<feature type="binding site" evidence="1">
    <location>
        <position position="351"/>
    </location>
    <ligand>
        <name>UDP-alpha-D-glucose</name>
        <dbReference type="ChEBI" id="CHEBI:58885"/>
    </ligand>
</feature>
<feature type="binding site" evidence="1">
    <location>
        <position position="352"/>
    </location>
    <ligand>
        <name>UDP-alpha-D-glucose</name>
        <dbReference type="ChEBI" id="CHEBI:58885"/>
    </ligand>
</feature>
<feature type="binding site" evidence="1">
    <location>
        <position position="353"/>
    </location>
    <ligand>
        <name>UDP-alpha-D-glucose</name>
        <dbReference type="ChEBI" id="CHEBI:58885"/>
    </ligand>
</feature>
<feature type="binding site" evidence="1">
    <location>
        <position position="356"/>
    </location>
    <ligand>
        <name>UDP-alpha-D-glucose</name>
        <dbReference type="ChEBI" id="CHEBI:58885"/>
    </ligand>
</feature>
<feature type="binding site" evidence="1">
    <location>
        <position position="372"/>
    </location>
    <ligand>
        <name>UDP-alpha-D-glucose</name>
        <dbReference type="ChEBI" id="CHEBI:58885"/>
    </ligand>
</feature>
<feature type="binding site" evidence="1">
    <location>
        <position position="373"/>
    </location>
    <ligand>
        <name>UDP-alpha-D-glucose</name>
        <dbReference type="ChEBI" id="CHEBI:58885"/>
    </ligand>
</feature>
<name>GLT2_CROSA</name>
<gene>
    <name type="primary">GLT2</name>
</gene>
<evidence type="ECO:0000250" key="1">
    <source>
        <dbReference type="UniProtKB" id="A0A0A1HA03"/>
    </source>
</evidence>
<evidence type="ECO:0000250" key="2">
    <source>
        <dbReference type="UniProtKB" id="P51094"/>
    </source>
</evidence>
<evidence type="ECO:0000269" key="3">
    <source>
    </source>
</evidence>
<evidence type="ECO:0000269" key="4">
    <source ref="2"/>
</evidence>
<evidence type="ECO:0000305" key="5"/>
<keyword id="KW-0125">Carotenoid biosynthesis</keyword>
<keyword id="KW-0328">Glycosyltransferase</keyword>
<keyword id="KW-0808">Transferase</keyword>